<proteinExistence type="inferred from homology"/>
<accession>A0RJ11</accession>
<sequence length="591" mass="66348">MAERTHACGKVTVEAVGQTVQLKGWVQKRRDLGGLIFIDLRDRTGIVQVVFNPETSKEALEVAETIRSEYVLHVEGTVVERGEGAINDNMATGRIEVQATKVNVLNAAKTTPIIIADDTDASEDVRLKYRYLDLRRPVMFNTFKMRHDVTKTIRNFLDTEEFLEVETPILTKSTPEGARDYLVPSRVHDGEFYALPQSPQLFKQLLMVGGFERYYQVARCFRDEDLRADRQPEFTQIDIEASFLTQDEILDMMERMMTKVMKDAKGVEVSAPFPRMKYADAMARYGSDKPDTRFEMELTDLSEFAAGCGFKVFTSAVESGGQVKAINAKGAASKYSRKDIDALTEFVKVYGAKGLAWLKVEEDGLKGPIAKFFGEEDANVLMNTLEATAGDLLLFVADKKSVVADSLGALRLRLGKELELIDESKFNFLWVTDWPLLEYDEDADRYFAAHHPFTMPFREDVELLETAPEKARAQAYDLVLNGYELGGGSLRIYERDVQEKMFKALGFSQEEAQEQFGFLLEAFEYGTPPHGGIALGLDRLVMLLAGRTNLRDTIAFPKTASASCLLTEAPSPVAEAQLEELNLKLNVKEEK</sequence>
<gene>
    <name evidence="1" type="primary">aspS</name>
    <name type="ordered locus">BALH_3984</name>
</gene>
<reference key="1">
    <citation type="journal article" date="2007" name="J. Bacteriol.">
        <title>The complete genome sequence of Bacillus thuringiensis Al Hakam.</title>
        <authorList>
            <person name="Challacombe J.F."/>
            <person name="Altherr M.R."/>
            <person name="Xie G."/>
            <person name="Bhotika S.S."/>
            <person name="Brown N."/>
            <person name="Bruce D."/>
            <person name="Campbell C.S."/>
            <person name="Campbell M.L."/>
            <person name="Chen J."/>
            <person name="Chertkov O."/>
            <person name="Cleland C."/>
            <person name="Dimitrijevic M."/>
            <person name="Doggett N.A."/>
            <person name="Fawcett J.J."/>
            <person name="Glavina T."/>
            <person name="Goodwin L.A."/>
            <person name="Green L.D."/>
            <person name="Han C.S."/>
            <person name="Hill K.K."/>
            <person name="Hitchcock P."/>
            <person name="Jackson P.J."/>
            <person name="Keim P."/>
            <person name="Kewalramani A.R."/>
            <person name="Longmire J."/>
            <person name="Lucas S."/>
            <person name="Malfatti S."/>
            <person name="Martinez D."/>
            <person name="McMurry K."/>
            <person name="Meincke L.J."/>
            <person name="Misra M."/>
            <person name="Moseman B.L."/>
            <person name="Mundt M."/>
            <person name="Munk A.C."/>
            <person name="Okinaka R.T."/>
            <person name="Parson-Quintana B."/>
            <person name="Reilly L.P."/>
            <person name="Richardson P."/>
            <person name="Robinson D.L."/>
            <person name="Saunders E."/>
            <person name="Tapia R."/>
            <person name="Tesmer J.G."/>
            <person name="Thayer N."/>
            <person name="Thompson L.S."/>
            <person name="Tice H."/>
            <person name="Ticknor L.O."/>
            <person name="Wills P.L."/>
            <person name="Gilna P."/>
            <person name="Brettin T.S."/>
        </authorList>
    </citation>
    <scope>NUCLEOTIDE SEQUENCE [LARGE SCALE GENOMIC DNA]</scope>
    <source>
        <strain>Al Hakam</strain>
    </source>
</reference>
<protein>
    <recommendedName>
        <fullName evidence="1">Aspartate--tRNA(Asp/Asn) ligase</fullName>
        <ecNumber evidence="1">6.1.1.23</ecNumber>
    </recommendedName>
    <alternativeName>
        <fullName evidence="1">Aspartyl-tRNA synthetase</fullName>
        <shortName evidence="1">AspRS</shortName>
    </alternativeName>
    <alternativeName>
        <fullName evidence="1">Non-discriminating aspartyl-tRNA synthetase</fullName>
        <shortName evidence="1">ND-AspRS</shortName>
    </alternativeName>
</protein>
<feature type="chain" id="PRO_1000006636" description="Aspartate--tRNA(Asp/Asn) ligase">
    <location>
        <begin position="1"/>
        <end position="591"/>
    </location>
</feature>
<feature type="region of interest" description="Aspartate" evidence="1">
    <location>
        <begin position="200"/>
        <end position="203"/>
    </location>
</feature>
<feature type="binding site" evidence="1">
    <location>
        <position position="176"/>
    </location>
    <ligand>
        <name>L-aspartate</name>
        <dbReference type="ChEBI" id="CHEBI:29991"/>
    </ligand>
</feature>
<feature type="binding site" evidence="1">
    <location>
        <begin position="222"/>
        <end position="224"/>
    </location>
    <ligand>
        <name>ATP</name>
        <dbReference type="ChEBI" id="CHEBI:30616"/>
    </ligand>
</feature>
<feature type="binding site" evidence="1">
    <location>
        <position position="222"/>
    </location>
    <ligand>
        <name>L-aspartate</name>
        <dbReference type="ChEBI" id="CHEBI:29991"/>
    </ligand>
</feature>
<feature type="binding site" evidence="1">
    <location>
        <position position="231"/>
    </location>
    <ligand>
        <name>ATP</name>
        <dbReference type="ChEBI" id="CHEBI:30616"/>
    </ligand>
</feature>
<feature type="binding site" evidence="1">
    <location>
        <position position="450"/>
    </location>
    <ligand>
        <name>L-aspartate</name>
        <dbReference type="ChEBI" id="CHEBI:29991"/>
    </ligand>
</feature>
<feature type="binding site" evidence="1">
    <location>
        <position position="484"/>
    </location>
    <ligand>
        <name>ATP</name>
        <dbReference type="ChEBI" id="CHEBI:30616"/>
    </ligand>
</feature>
<feature type="binding site" evidence="1">
    <location>
        <position position="491"/>
    </location>
    <ligand>
        <name>L-aspartate</name>
        <dbReference type="ChEBI" id="CHEBI:29991"/>
    </ligand>
</feature>
<feature type="binding site" evidence="1">
    <location>
        <begin position="536"/>
        <end position="539"/>
    </location>
    <ligand>
        <name>ATP</name>
        <dbReference type="ChEBI" id="CHEBI:30616"/>
    </ligand>
</feature>
<feature type="site" description="Important for tRNA non-discrimination" evidence="1">
    <location>
        <position position="84"/>
    </location>
</feature>
<organism>
    <name type="scientific">Bacillus thuringiensis (strain Al Hakam)</name>
    <dbReference type="NCBI Taxonomy" id="412694"/>
    <lineage>
        <taxon>Bacteria</taxon>
        <taxon>Bacillati</taxon>
        <taxon>Bacillota</taxon>
        <taxon>Bacilli</taxon>
        <taxon>Bacillales</taxon>
        <taxon>Bacillaceae</taxon>
        <taxon>Bacillus</taxon>
        <taxon>Bacillus cereus group</taxon>
    </lineage>
</organism>
<evidence type="ECO:0000255" key="1">
    <source>
        <dbReference type="HAMAP-Rule" id="MF_00044"/>
    </source>
</evidence>
<dbReference type="EC" id="6.1.1.23" evidence="1"/>
<dbReference type="EMBL" id="CP000485">
    <property type="protein sequence ID" value="ABK87204.1"/>
    <property type="molecule type" value="Genomic_DNA"/>
</dbReference>
<dbReference type="RefSeq" id="WP_000840895.1">
    <property type="nucleotide sequence ID" value="NC_008600.1"/>
</dbReference>
<dbReference type="SMR" id="A0RJ11"/>
<dbReference type="KEGG" id="btl:BALH_3984"/>
<dbReference type="HOGENOM" id="CLU_014330_3_2_9"/>
<dbReference type="GO" id="GO:0005737">
    <property type="term" value="C:cytoplasm"/>
    <property type="evidence" value="ECO:0007669"/>
    <property type="project" value="UniProtKB-SubCell"/>
</dbReference>
<dbReference type="GO" id="GO:0004815">
    <property type="term" value="F:aspartate-tRNA ligase activity"/>
    <property type="evidence" value="ECO:0007669"/>
    <property type="project" value="UniProtKB-UniRule"/>
</dbReference>
<dbReference type="GO" id="GO:0050560">
    <property type="term" value="F:aspartate-tRNA(Asn) ligase activity"/>
    <property type="evidence" value="ECO:0007669"/>
    <property type="project" value="UniProtKB-EC"/>
</dbReference>
<dbReference type="GO" id="GO:0005524">
    <property type="term" value="F:ATP binding"/>
    <property type="evidence" value="ECO:0007669"/>
    <property type="project" value="UniProtKB-UniRule"/>
</dbReference>
<dbReference type="GO" id="GO:0140096">
    <property type="term" value="F:catalytic activity, acting on a protein"/>
    <property type="evidence" value="ECO:0007669"/>
    <property type="project" value="UniProtKB-ARBA"/>
</dbReference>
<dbReference type="GO" id="GO:0003676">
    <property type="term" value="F:nucleic acid binding"/>
    <property type="evidence" value="ECO:0007669"/>
    <property type="project" value="InterPro"/>
</dbReference>
<dbReference type="GO" id="GO:0016740">
    <property type="term" value="F:transferase activity"/>
    <property type="evidence" value="ECO:0007669"/>
    <property type="project" value="UniProtKB-ARBA"/>
</dbReference>
<dbReference type="GO" id="GO:0006422">
    <property type="term" value="P:aspartyl-tRNA aminoacylation"/>
    <property type="evidence" value="ECO:0007669"/>
    <property type="project" value="UniProtKB-UniRule"/>
</dbReference>
<dbReference type="CDD" id="cd00777">
    <property type="entry name" value="AspRS_core"/>
    <property type="match status" value="1"/>
</dbReference>
<dbReference type="CDD" id="cd04317">
    <property type="entry name" value="EcAspRS_like_N"/>
    <property type="match status" value="1"/>
</dbReference>
<dbReference type="Gene3D" id="3.30.930.10">
    <property type="entry name" value="Bira Bifunctional Protein, Domain 2"/>
    <property type="match status" value="1"/>
</dbReference>
<dbReference type="Gene3D" id="3.30.1360.30">
    <property type="entry name" value="GAD-like domain"/>
    <property type="match status" value="1"/>
</dbReference>
<dbReference type="Gene3D" id="2.40.50.140">
    <property type="entry name" value="Nucleic acid-binding proteins"/>
    <property type="match status" value="1"/>
</dbReference>
<dbReference type="HAMAP" id="MF_00044">
    <property type="entry name" value="Asp_tRNA_synth_type1"/>
    <property type="match status" value="1"/>
</dbReference>
<dbReference type="InterPro" id="IPR004364">
    <property type="entry name" value="Aa-tRNA-synt_II"/>
</dbReference>
<dbReference type="InterPro" id="IPR006195">
    <property type="entry name" value="aa-tRNA-synth_II"/>
</dbReference>
<dbReference type="InterPro" id="IPR045864">
    <property type="entry name" value="aa-tRNA-synth_II/BPL/LPL"/>
</dbReference>
<dbReference type="InterPro" id="IPR004524">
    <property type="entry name" value="Asp-tRNA-ligase_1"/>
</dbReference>
<dbReference type="InterPro" id="IPR047089">
    <property type="entry name" value="Asp-tRNA-ligase_1_N"/>
</dbReference>
<dbReference type="InterPro" id="IPR002312">
    <property type="entry name" value="Asp/Asn-tRNA-synth_IIb"/>
</dbReference>
<dbReference type="InterPro" id="IPR047090">
    <property type="entry name" value="AspRS_core"/>
</dbReference>
<dbReference type="InterPro" id="IPR004115">
    <property type="entry name" value="GAD-like_sf"/>
</dbReference>
<dbReference type="InterPro" id="IPR029351">
    <property type="entry name" value="GAD_dom"/>
</dbReference>
<dbReference type="InterPro" id="IPR012340">
    <property type="entry name" value="NA-bd_OB-fold"/>
</dbReference>
<dbReference type="InterPro" id="IPR004365">
    <property type="entry name" value="NA-bd_OB_tRNA"/>
</dbReference>
<dbReference type="NCBIfam" id="TIGR00459">
    <property type="entry name" value="aspS_bact"/>
    <property type="match status" value="1"/>
</dbReference>
<dbReference type="NCBIfam" id="NF001750">
    <property type="entry name" value="PRK00476.1"/>
    <property type="match status" value="1"/>
</dbReference>
<dbReference type="PANTHER" id="PTHR22594:SF5">
    <property type="entry name" value="ASPARTATE--TRNA LIGASE, MITOCHONDRIAL"/>
    <property type="match status" value="1"/>
</dbReference>
<dbReference type="PANTHER" id="PTHR22594">
    <property type="entry name" value="ASPARTYL/LYSYL-TRNA SYNTHETASE"/>
    <property type="match status" value="1"/>
</dbReference>
<dbReference type="Pfam" id="PF02938">
    <property type="entry name" value="GAD"/>
    <property type="match status" value="1"/>
</dbReference>
<dbReference type="Pfam" id="PF00152">
    <property type="entry name" value="tRNA-synt_2"/>
    <property type="match status" value="1"/>
</dbReference>
<dbReference type="Pfam" id="PF01336">
    <property type="entry name" value="tRNA_anti-codon"/>
    <property type="match status" value="1"/>
</dbReference>
<dbReference type="PRINTS" id="PR01042">
    <property type="entry name" value="TRNASYNTHASP"/>
</dbReference>
<dbReference type="SUPFAM" id="SSF55681">
    <property type="entry name" value="Class II aaRS and biotin synthetases"/>
    <property type="match status" value="1"/>
</dbReference>
<dbReference type="SUPFAM" id="SSF55261">
    <property type="entry name" value="GAD domain-like"/>
    <property type="match status" value="1"/>
</dbReference>
<dbReference type="SUPFAM" id="SSF50249">
    <property type="entry name" value="Nucleic acid-binding proteins"/>
    <property type="match status" value="1"/>
</dbReference>
<dbReference type="PROSITE" id="PS50862">
    <property type="entry name" value="AA_TRNA_LIGASE_II"/>
    <property type="match status" value="1"/>
</dbReference>
<name>SYDND_BACAH</name>
<comment type="function">
    <text evidence="1">Aspartyl-tRNA synthetase with relaxed tRNA specificity since it is able to aspartylate not only its cognate tRNA(Asp) but also tRNA(Asn). Reaction proceeds in two steps: L-aspartate is first activated by ATP to form Asp-AMP and then transferred to the acceptor end of tRNA(Asp/Asn).</text>
</comment>
<comment type="catalytic activity">
    <reaction evidence="1">
        <text>tRNA(Asx) + L-aspartate + ATP = L-aspartyl-tRNA(Asx) + AMP + diphosphate</text>
        <dbReference type="Rhea" id="RHEA:18349"/>
        <dbReference type="Rhea" id="RHEA-COMP:9710"/>
        <dbReference type="Rhea" id="RHEA-COMP:9711"/>
        <dbReference type="ChEBI" id="CHEBI:29991"/>
        <dbReference type="ChEBI" id="CHEBI:30616"/>
        <dbReference type="ChEBI" id="CHEBI:33019"/>
        <dbReference type="ChEBI" id="CHEBI:78442"/>
        <dbReference type="ChEBI" id="CHEBI:78516"/>
        <dbReference type="ChEBI" id="CHEBI:456215"/>
        <dbReference type="EC" id="6.1.1.23"/>
    </reaction>
</comment>
<comment type="subunit">
    <text evidence="1">Homodimer.</text>
</comment>
<comment type="subcellular location">
    <subcellularLocation>
        <location evidence="1">Cytoplasm</location>
    </subcellularLocation>
</comment>
<comment type="similarity">
    <text evidence="1">Belongs to the class-II aminoacyl-tRNA synthetase family. Type 1 subfamily.</text>
</comment>
<keyword id="KW-0030">Aminoacyl-tRNA synthetase</keyword>
<keyword id="KW-0067">ATP-binding</keyword>
<keyword id="KW-0963">Cytoplasm</keyword>
<keyword id="KW-0436">Ligase</keyword>
<keyword id="KW-0547">Nucleotide-binding</keyword>
<keyword id="KW-0648">Protein biosynthesis</keyword>